<protein>
    <recommendedName>
        <fullName evidence="1">A-type ATP synthase subunit A</fullName>
        <ecNumber evidence="1">7.1.2.2</ecNumber>
    </recommendedName>
</protein>
<reference key="1">
    <citation type="journal article" date="2008" name="Genome Biol.">
        <title>A genomic analysis of the archaeal system Ignicoccus hospitalis-Nanoarchaeum equitans.</title>
        <authorList>
            <person name="Podar M."/>
            <person name="Anderson I."/>
            <person name="Makarova K.S."/>
            <person name="Elkins J.G."/>
            <person name="Ivanova N."/>
            <person name="Wall M.A."/>
            <person name="Lykidis A."/>
            <person name="Mavromatis K."/>
            <person name="Sun H."/>
            <person name="Hudson M.E."/>
            <person name="Chen W."/>
            <person name="Deciu C."/>
            <person name="Hutchison D."/>
            <person name="Eads J.R."/>
            <person name="Anderson A."/>
            <person name="Fernandes F."/>
            <person name="Szeto E."/>
            <person name="Lapidus A."/>
            <person name="Kyrpides N.C."/>
            <person name="Saier M.H. Jr."/>
            <person name="Richardson P.M."/>
            <person name="Rachel R."/>
            <person name="Huber H."/>
            <person name="Eisen J.A."/>
            <person name="Koonin E.V."/>
            <person name="Keller M."/>
            <person name="Stetter K.O."/>
        </authorList>
    </citation>
    <scope>NUCLEOTIDE SEQUENCE [LARGE SCALE GENOMIC DNA]</scope>
    <source>
        <strain>KIN4/I / DSM 18386 / JCM 14125</strain>
    </source>
</reference>
<proteinExistence type="evidence at protein level"/>
<organism>
    <name type="scientific">Ignicoccus hospitalis (strain KIN4/I / DSM 18386 / JCM 14125)</name>
    <dbReference type="NCBI Taxonomy" id="453591"/>
    <lineage>
        <taxon>Archaea</taxon>
        <taxon>Thermoproteota</taxon>
        <taxon>Thermoprotei</taxon>
        <taxon>Desulfurococcales</taxon>
        <taxon>Desulfurococcaceae</taxon>
        <taxon>Ignicoccus</taxon>
    </lineage>
</organism>
<gene>
    <name evidence="1" type="primary">atpA</name>
    <name type="ordered locus">Igni_1305</name>
</gene>
<accession>A8AC29</accession>
<dbReference type="EC" id="7.1.2.2" evidence="1"/>
<dbReference type="EMBL" id="CP000816">
    <property type="protein sequence ID" value="ABU82481.1"/>
    <property type="molecule type" value="Genomic_DNA"/>
</dbReference>
<dbReference type="RefSeq" id="WP_012123445.1">
    <property type="nucleotide sequence ID" value="NC_009776.1"/>
</dbReference>
<dbReference type="SMR" id="A8AC29"/>
<dbReference type="DIP" id="DIP-58544N"/>
<dbReference type="IntAct" id="A8AC29">
    <property type="interactions" value="1"/>
</dbReference>
<dbReference type="STRING" id="453591.Igni_1305"/>
<dbReference type="GeneID" id="5563173"/>
<dbReference type="KEGG" id="iho:Igni_1305"/>
<dbReference type="eggNOG" id="arCOG00868">
    <property type="taxonomic scope" value="Archaea"/>
</dbReference>
<dbReference type="HOGENOM" id="CLU_008162_3_1_2"/>
<dbReference type="OrthoDB" id="115235at2157"/>
<dbReference type="PhylomeDB" id="A8AC29"/>
<dbReference type="Proteomes" id="UP000000262">
    <property type="component" value="Chromosome"/>
</dbReference>
<dbReference type="GO" id="GO:0005886">
    <property type="term" value="C:plasma membrane"/>
    <property type="evidence" value="ECO:0007669"/>
    <property type="project" value="UniProtKB-SubCell"/>
</dbReference>
<dbReference type="GO" id="GO:0005524">
    <property type="term" value="F:ATP binding"/>
    <property type="evidence" value="ECO:0007669"/>
    <property type="project" value="UniProtKB-UniRule"/>
</dbReference>
<dbReference type="GO" id="GO:0016887">
    <property type="term" value="F:ATP hydrolysis activity"/>
    <property type="evidence" value="ECO:0007669"/>
    <property type="project" value="InterPro"/>
</dbReference>
<dbReference type="GO" id="GO:0046933">
    <property type="term" value="F:proton-transporting ATP synthase activity, rotational mechanism"/>
    <property type="evidence" value="ECO:0007669"/>
    <property type="project" value="UniProtKB-UniRule"/>
</dbReference>
<dbReference type="GO" id="GO:0046961">
    <property type="term" value="F:proton-transporting ATPase activity, rotational mechanism"/>
    <property type="evidence" value="ECO:0007669"/>
    <property type="project" value="InterPro"/>
</dbReference>
<dbReference type="GO" id="GO:0042777">
    <property type="term" value="P:proton motive force-driven plasma membrane ATP synthesis"/>
    <property type="evidence" value="ECO:0007669"/>
    <property type="project" value="UniProtKB-UniRule"/>
</dbReference>
<dbReference type="CDD" id="cd18111">
    <property type="entry name" value="ATP-synt_V_A-type_alpha_C"/>
    <property type="match status" value="1"/>
</dbReference>
<dbReference type="CDD" id="cd18119">
    <property type="entry name" value="ATP-synt_V_A-type_alpha_N"/>
    <property type="match status" value="1"/>
</dbReference>
<dbReference type="CDD" id="cd01134">
    <property type="entry name" value="V_A-ATPase_A"/>
    <property type="match status" value="1"/>
</dbReference>
<dbReference type="FunFam" id="1.10.1140.10:FF:000002">
    <property type="entry name" value="V-type proton ATPase catalytic subunit A"/>
    <property type="match status" value="1"/>
</dbReference>
<dbReference type="FunFam" id="2.40.30.20:FF:000002">
    <property type="entry name" value="V-type proton ATPase catalytic subunit A"/>
    <property type="match status" value="1"/>
</dbReference>
<dbReference type="FunFam" id="2.40.50.100:FF:000008">
    <property type="entry name" value="V-type proton ATPase catalytic subunit A"/>
    <property type="match status" value="1"/>
</dbReference>
<dbReference type="Gene3D" id="2.40.30.20">
    <property type="match status" value="1"/>
</dbReference>
<dbReference type="Gene3D" id="2.40.50.100">
    <property type="match status" value="1"/>
</dbReference>
<dbReference type="Gene3D" id="1.10.1140.10">
    <property type="entry name" value="Bovine Mitochondrial F1-atpase, Atp Synthase Beta Chain, Chain D, domain 3"/>
    <property type="match status" value="1"/>
</dbReference>
<dbReference type="Gene3D" id="3.40.50.300">
    <property type="entry name" value="P-loop containing nucleotide triphosphate hydrolases"/>
    <property type="match status" value="1"/>
</dbReference>
<dbReference type="HAMAP" id="MF_00309">
    <property type="entry name" value="ATP_synth_A_arch"/>
    <property type="match status" value="1"/>
</dbReference>
<dbReference type="InterPro" id="IPR003593">
    <property type="entry name" value="AAA+_ATPase"/>
</dbReference>
<dbReference type="InterPro" id="IPR055190">
    <property type="entry name" value="ATP-synt_VA_C"/>
</dbReference>
<dbReference type="InterPro" id="IPR031686">
    <property type="entry name" value="ATP-synth_a_Xtn"/>
</dbReference>
<dbReference type="InterPro" id="IPR023366">
    <property type="entry name" value="ATP_synth_asu-like_sf"/>
</dbReference>
<dbReference type="InterPro" id="IPR020003">
    <property type="entry name" value="ATPase_a/bsu_AS"/>
</dbReference>
<dbReference type="InterPro" id="IPR004100">
    <property type="entry name" value="ATPase_F1/V1/A1_a/bsu_N"/>
</dbReference>
<dbReference type="InterPro" id="IPR036121">
    <property type="entry name" value="ATPase_F1/V1/A1_a/bsu_N_sf"/>
</dbReference>
<dbReference type="InterPro" id="IPR000194">
    <property type="entry name" value="ATPase_F1/V1/A1_a/bsu_nucl-bd"/>
</dbReference>
<dbReference type="InterPro" id="IPR024034">
    <property type="entry name" value="ATPase_F1/V1_b/a_C"/>
</dbReference>
<dbReference type="InterPro" id="IPR027417">
    <property type="entry name" value="P-loop_NTPase"/>
</dbReference>
<dbReference type="InterPro" id="IPR022878">
    <property type="entry name" value="V-ATPase_asu"/>
</dbReference>
<dbReference type="NCBIfam" id="NF003220">
    <property type="entry name" value="PRK04192.1"/>
    <property type="match status" value="1"/>
</dbReference>
<dbReference type="PANTHER" id="PTHR43607:SF1">
    <property type="entry name" value="H(+)-TRANSPORTING TWO-SECTOR ATPASE"/>
    <property type="match status" value="1"/>
</dbReference>
<dbReference type="PANTHER" id="PTHR43607">
    <property type="entry name" value="V-TYPE PROTON ATPASE CATALYTIC SUBUNIT A"/>
    <property type="match status" value="1"/>
</dbReference>
<dbReference type="Pfam" id="PF00006">
    <property type="entry name" value="ATP-synt_ab"/>
    <property type="match status" value="1"/>
</dbReference>
<dbReference type="Pfam" id="PF02874">
    <property type="entry name" value="ATP-synt_ab_N"/>
    <property type="match status" value="1"/>
</dbReference>
<dbReference type="Pfam" id="PF16886">
    <property type="entry name" value="ATP-synt_ab_Xtn"/>
    <property type="match status" value="1"/>
</dbReference>
<dbReference type="Pfam" id="PF22919">
    <property type="entry name" value="ATP-synt_VA_C"/>
    <property type="match status" value="1"/>
</dbReference>
<dbReference type="SMART" id="SM00382">
    <property type="entry name" value="AAA"/>
    <property type="match status" value="1"/>
</dbReference>
<dbReference type="SUPFAM" id="SSF47917">
    <property type="entry name" value="C-terminal domain of alpha and beta subunits of F1 ATP synthase"/>
    <property type="match status" value="1"/>
</dbReference>
<dbReference type="SUPFAM" id="SSF50615">
    <property type="entry name" value="N-terminal domain of alpha and beta subunits of F1 ATP synthase"/>
    <property type="match status" value="1"/>
</dbReference>
<dbReference type="SUPFAM" id="SSF52540">
    <property type="entry name" value="P-loop containing nucleoside triphosphate hydrolases"/>
    <property type="match status" value="1"/>
</dbReference>
<dbReference type="PROSITE" id="PS00152">
    <property type="entry name" value="ATPASE_ALPHA_BETA"/>
    <property type="match status" value="1"/>
</dbReference>
<evidence type="ECO:0000255" key="1">
    <source>
        <dbReference type="HAMAP-Rule" id="MF_00309"/>
    </source>
</evidence>
<sequence length="596" mass="66713">MAVKGKVLRVRGPVVIAEDMQGVQMYEVVEVGKDGLVGEVTRITGDKAVIQVYEDTTGITPGEPVVGTGSPFSVELGPGLLSHIFDGILRPLESIHEVAKSPFIKRGIKVPSLDRSKKWEWRPNPELKPGDKVSGDDILGTVPETPLIEHKVMVPPNVVPVDKAATLKWLAPAGEYTIEDTIAVVEYEGKEIELKMYHRWPIRRPRPVKEKFEPVTPLITGVRVLDTLFPMAKGGTGAIPGPFGSGKTVTLRTLAAWSDAKVVIYVGCGERGNEMTDVLVNFPHYKDPWSGRPLMERTILVANTSNMPVAAREASIYVGVTLAEYYRDMGYDSLLIADSTSRWAEALRDIAGRMEEMPAEEGFPPYLASRLAEYYERAGRARIPGRPERVGSVTIASAVSPPGGDFSEPVTSHTRRFVRVFWALDASLAYARHYPAINWLVSYSLYVDTVAKWWHENISPKWKEYRDEMMSILLKEDELKEIVRLVGPESLSEPDKLIIETARIIKEAFLQQNAFDPIDAFCSPKKQFLMMKIIIDFYRKAKELVNAGVPVATIREAVKEEVAELIRSRFTVRNEELEKLEDLYARFMEKLSSLSP</sequence>
<name>AATA_IGNH4</name>
<keyword id="KW-0066">ATP synthesis</keyword>
<keyword id="KW-0067">ATP-binding</keyword>
<keyword id="KW-1003">Cell membrane</keyword>
<keyword id="KW-0375">Hydrogen ion transport</keyword>
<keyword id="KW-0406">Ion transport</keyword>
<keyword id="KW-0472">Membrane</keyword>
<keyword id="KW-0547">Nucleotide-binding</keyword>
<keyword id="KW-1185">Reference proteome</keyword>
<keyword id="KW-1278">Translocase</keyword>
<keyword id="KW-0813">Transport</keyword>
<comment type="function">
    <text evidence="1">Component of the A-type ATP synthase that produces ATP from ADP in the presence of a proton gradient across the membrane. The A chain is the catalytic subunit.</text>
</comment>
<comment type="catalytic activity">
    <reaction evidence="1">
        <text>ATP + H2O + 4 H(+)(in) = ADP + phosphate + 5 H(+)(out)</text>
        <dbReference type="Rhea" id="RHEA:57720"/>
        <dbReference type="ChEBI" id="CHEBI:15377"/>
        <dbReference type="ChEBI" id="CHEBI:15378"/>
        <dbReference type="ChEBI" id="CHEBI:30616"/>
        <dbReference type="ChEBI" id="CHEBI:43474"/>
        <dbReference type="ChEBI" id="CHEBI:456216"/>
        <dbReference type="EC" id="7.1.2.2"/>
    </reaction>
</comment>
<comment type="subunit">
    <text evidence="1">Has multiple subunits with at least A(3), B(3), C, D, E, F, H, I and proteolipid K(x).</text>
</comment>
<comment type="interaction">
    <interactant intactId="EBI-15831423">
        <id>A8AC29</id>
    </interactant>
    <interactant intactId="EBI-15831444">
        <id>A8AAA9</id>
        <label>atpB</label>
    </interactant>
    <organismsDiffer>false</organismsDiffer>
    <experiments>2</experiments>
</comment>
<comment type="subcellular location">
    <subcellularLocation>
        <location evidence="1">Cell membrane</location>
        <topology evidence="1">Peripheral membrane protein</topology>
    </subcellularLocation>
</comment>
<comment type="similarity">
    <text evidence="1">Belongs to the ATPase alpha/beta chains family.</text>
</comment>
<feature type="chain" id="PRO_1000059344" description="A-type ATP synthase subunit A">
    <location>
        <begin position="1"/>
        <end position="596"/>
    </location>
</feature>
<feature type="binding site" evidence="1">
    <location>
        <begin position="241"/>
        <end position="248"/>
    </location>
    <ligand>
        <name>ATP</name>
        <dbReference type="ChEBI" id="CHEBI:30616"/>
    </ligand>
</feature>